<gene>
    <name evidence="1" type="primary">rpsE</name>
    <name type="ordered locus">MAG5300</name>
</gene>
<organism>
    <name type="scientific">Mycoplasmopsis agalactiae (strain NCTC 10123 / CIP 59.7 / PG2)</name>
    <name type="common">Mycoplasma agalactiae</name>
    <dbReference type="NCBI Taxonomy" id="347257"/>
    <lineage>
        <taxon>Bacteria</taxon>
        <taxon>Bacillati</taxon>
        <taxon>Mycoplasmatota</taxon>
        <taxon>Mycoplasmoidales</taxon>
        <taxon>Metamycoplasmataceae</taxon>
        <taxon>Mycoplasmopsis</taxon>
    </lineage>
</organism>
<reference key="1">
    <citation type="journal article" date="2007" name="PLoS Genet.">
        <title>Being pathogenic, plastic, and sexual while living with a nearly minimal bacterial genome.</title>
        <authorList>
            <person name="Sirand-Pugnet P."/>
            <person name="Lartigue C."/>
            <person name="Marenda M."/>
            <person name="Jacob D."/>
            <person name="Barre A."/>
            <person name="Barbe V."/>
            <person name="Schenowitz C."/>
            <person name="Mangenot S."/>
            <person name="Couloux A."/>
            <person name="Segurens B."/>
            <person name="de Daruvar A."/>
            <person name="Blanchard A."/>
            <person name="Citti C."/>
        </authorList>
    </citation>
    <scope>NUCLEOTIDE SEQUENCE [LARGE SCALE GENOMIC DNA]</scope>
    <source>
        <strain>NCTC 10123 / CIP 59.7 / PG2</strain>
    </source>
</reference>
<proteinExistence type="inferred from homology"/>
<dbReference type="EMBL" id="CU179680">
    <property type="protein sequence ID" value="CAL59228.1"/>
    <property type="molecule type" value="Genomic_DNA"/>
</dbReference>
<dbReference type="RefSeq" id="WP_011949693.1">
    <property type="nucleotide sequence ID" value="NC_009497.1"/>
</dbReference>
<dbReference type="SMR" id="A5IYW9"/>
<dbReference type="STRING" id="347257.MAG5300"/>
<dbReference type="GeneID" id="93358273"/>
<dbReference type="KEGG" id="maa:MAG5300"/>
<dbReference type="HOGENOM" id="CLU_065898_2_1_14"/>
<dbReference type="Proteomes" id="UP000007065">
    <property type="component" value="Chromosome"/>
</dbReference>
<dbReference type="GO" id="GO:0015935">
    <property type="term" value="C:small ribosomal subunit"/>
    <property type="evidence" value="ECO:0007669"/>
    <property type="project" value="InterPro"/>
</dbReference>
<dbReference type="GO" id="GO:0019843">
    <property type="term" value="F:rRNA binding"/>
    <property type="evidence" value="ECO:0007669"/>
    <property type="project" value="UniProtKB-UniRule"/>
</dbReference>
<dbReference type="GO" id="GO:0003735">
    <property type="term" value="F:structural constituent of ribosome"/>
    <property type="evidence" value="ECO:0007669"/>
    <property type="project" value="InterPro"/>
</dbReference>
<dbReference type="GO" id="GO:0006412">
    <property type="term" value="P:translation"/>
    <property type="evidence" value="ECO:0007669"/>
    <property type="project" value="UniProtKB-UniRule"/>
</dbReference>
<dbReference type="FunFam" id="3.30.160.20:FF:000001">
    <property type="entry name" value="30S ribosomal protein S5"/>
    <property type="match status" value="1"/>
</dbReference>
<dbReference type="FunFam" id="3.30.230.10:FF:000002">
    <property type="entry name" value="30S ribosomal protein S5"/>
    <property type="match status" value="1"/>
</dbReference>
<dbReference type="Gene3D" id="3.30.160.20">
    <property type="match status" value="1"/>
</dbReference>
<dbReference type="Gene3D" id="3.30.230.10">
    <property type="match status" value="1"/>
</dbReference>
<dbReference type="HAMAP" id="MF_01307_B">
    <property type="entry name" value="Ribosomal_uS5_B"/>
    <property type="match status" value="1"/>
</dbReference>
<dbReference type="InterPro" id="IPR020568">
    <property type="entry name" value="Ribosomal_Su5_D2-typ_SF"/>
</dbReference>
<dbReference type="InterPro" id="IPR000851">
    <property type="entry name" value="Ribosomal_uS5"/>
</dbReference>
<dbReference type="InterPro" id="IPR005712">
    <property type="entry name" value="Ribosomal_uS5_bac-type"/>
</dbReference>
<dbReference type="InterPro" id="IPR005324">
    <property type="entry name" value="Ribosomal_uS5_C"/>
</dbReference>
<dbReference type="InterPro" id="IPR013810">
    <property type="entry name" value="Ribosomal_uS5_N"/>
</dbReference>
<dbReference type="InterPro" id="IPR018192">
    <property type="entry name" value="Ribosomal_uS5_N_CS"/>
</dbReference>
<dbReference type="InterPro" id="IPR014721">
    <property type="entry name" value="Ribsml_uS5_D2-typ_fold_subgr"/>
</dbReference>
<dbReference type="NCBIfam" id="TIGR01021">
    <property type="entry name" value="rpsE_bact"/>
    <property type="match status" value="1"/>
</dbReference>
<dbReference type="PANTHER" id="PTHR48277">
    <property type="entry name" value="MITOCHONDRIAL RIBOSOMAL PROTEIN S5"/>
    <property type="match status" value="1"/>
</dbReference>
<dbReference type="PANTHER" id="PTHR48277:SF1">
    <property type="entry name" value="MITOCHONDRIAL RIBOSOMAL PROTEIN S5"/>
    <property type="match status" value="1"/>
</dbReference>
<dbReference type="Pfam" id="PF00333">
    <property type="entry name" value="Ribosomal_S5"/>
    <property type="match status" value="1"/>
</dbReference>
<dbReference type="Pfam" id="PF03719">
    <property type="entry name" value="Ribosomal_S5_C"/>
    <property type="match status" value="1"/>
</dbReference>
<dbReference type="SUPFAM" id="SSF54768">
    <property type="entry name" value="dsRNA-binding domain-like"/>
    <property type="match status" value="1"/>
</dbReference>
<dbReference type="SUPFAM" id="SSF54211">
    <property type="entry name" value="Ribosomal protein S5 domain 2-like"/>
    <property type="match status" value="1"/>
</dbReference>
<dbReference type="PROSITE" id="PS00585">
    <property type="entry name" value="RIBOSOMAL_S5"/>
    <property type="match status" value="1"/>
</dbReference>
<dbReference type="PROSITE" id="PS50881">
    <property type="entry name" value="S5_DSRBD"/>
    <property type="match status" value="1"/>
</dbReference>
<comment type="function">
    <text evidence="1">With S4 and S12 plays an important role in translational accuracy.</text>
</comment>
<comment type="function">
    <text evidence="1">Located at the back of the 30S subunit body where it stabilizes the conformation of the head with respect to the body.</text>
</comment>
<comment type="subunit">
    <text evidence="1">Part of the 30S ribosomal subunit. Contacts proteins S4 and S8.</text>
</comment>
<comment type="domain">
    <text>The N-terminal domain interacts with the head of the 30S subunit; the C-terminal domain interacts with the body and contacts protein S4. The interaction surface between S4 and S5 is involved in control of translational fidelity.</text>
</comment>
<comment type="similarity">
    <text evidence="1">Belongs to the universal ribosomal protein uS5 family.</text>
</comment>
<sequence length="231" mass="25281">MADLENKTVKANVENKPGAAKTQSVSAPKRTESGAKKQIWEKRSAHDSKDMPKKSVDRANKVKNRTRFGEANNEFSEKVVNISRVTKVVKGGRRFSFSAFVVVGDKKGKVGFGHGKANEVPDAIKKAVKDARNHLISVPIQNKITVPHEIHAKFLASKVMLKPAPKGKGIVASGTVRAVVELAGYTDIYTKTYGSRSKANIVRATLKALQQLRTPEQIAEIRDKDVKDLLG</sequence>
<accession>A5IYW9</accession>
<name>RS5_MYCAP</name>
<keyword id="KW-1185">Reference proteome</keyword>
<keyword id="KW-0687">Ribonucleoprotein</keyword>
<keyword id="KW-0689">Ribosomal protein</keyword>
<keyword id="KW-0694">RNA-binding</keyword>
<keyword id="KW-0699">rRNA-binding</keyword>
<feature type="chain" id="PRO_1000165456" description="Small ribosomal subunit protein uS5">
    <location>
        <begin position="1"/>
        <end position="231"/>
    </location>
</feature>
<feature type="domain" description="S5 DRBM" evidence="1">
    <location>
        <begin position="75"/>
        <end position="138"/>
    </location>
</feature>
<feature type="region of interest" description="Disordered" evidence="2">
    <location>
        <begin position="1"/>
        <end position="63"/>
    </location>
</feature>
<feature type="compositionally biased region" description="Basic and acidic residues" evidence="2">
    <location>
        <begin position="29"/>
        <end position="60"/>
    </location>
</feature>
<evidence type="ECO:0000255" key="1">
    <source>
        <dbReference type="HAMAP-Rule" id="MF_01307"/>
    </source>
</evidence>
<evidence type="ECO:0000256" key="2">
    <source>
        <dbReference type="SAM" id="MobiDB-lite"/>
    </source>
</evidence>
<evidence type="ECO:0000305" key="3"/>
<protein>
    <recommendedName>
        <fullName evidence="1">Small ribosomal subunit protein uS5</fullName>
    </recommendedName>
    <alternativeName>
        <fullName evidence="3">30S ribosomal protein S5</fullName>
    </alternativeName>
</protein>